<protein>
    <recommendedName>
        <fullName evidence="1">Small ribosomal subunit biogenesis GTPase RsgA</fullName>
        <ecNumber evidence="1">3.6.1.-</ecNumber>
    </recommendedName>
</protein>
<comment type="function">
    <text evidence="1">One of several proteins that assist in the late maturation steps of the functional core of the 30S ribosomal subunit. Helps release RbfA from mature subunits. May play a role in the assembly of ribosomal proteins into the subunit. Circularly permuted GTPase that catalyzes slow GTP hydrolysis, GTPase activity is stimulated by the 30S ribosomal subunit.</text>
</comment>
<comment type="cofactor">
    <cofactor evidence="1">
        <name>Zn(2+)</name>
        <dbReference type="ChEBI" id="CHEBI:29105"/>
    </cofactor>
    <text evidence="1">Binds 1 zinc ion per subunit.</text>
</comment>
<comment type="subunit">
    <text evidence="1">Monomer. Associates with 30S ribosomal subunit, binds 16S rRNA.</text>
</comment>
<comment type="subcellular location">
    <subcellularLocation>
        <location evidence="1">Cytoplasm</location>
    </subcellularLocation>
</comment>
<comment type="similarity">
    <text evidence="1">Belongs to the TRAFAC class YlqF/YawG GTPase family. RsgA subfamily.</text>
</comment>
<gene>
    <name evidence="1" type="primary">rsgA</name>
    <name type="ordered locus">Tpet_1013</name>
</gene>
<accession>A5ILF8</accession>
<sequence>MSLRRRGIVVSFHSNMVTVEDEETGERILCKLRGKFRLQNLKIYVGDRVEYTPDETGSGVIENVLHRKNLLTKPHVANVDQVILVVTVKMPETSTYIIDKFLVLAEKNELETVMVFNKMDLYDEADLKKVRELEEIYSELYPIVKTSAKTGMGIEELKEYLKGKISTMAGLSGVGKSSLLNAINPGLKLRVSEVSEKLQRGRHTTTTAQLLKFDFGGYVVDTPGFANLEISDIEPEELKNYFKEFGDKQCFFSDCNHVDEPDCGVKEAVENGEIAESRYENYVKMFYELLGRRKK</sequence>
<feature type="chain" id="PRO_1000188147" description="Small ribosomal subunit biogenesis GTPase RsgA">
    <location>
        <begin position="1"/>
        <end position="295"/>
    </location>
</feature>
<feature type="domain" description="CP-type G" evidence="2">
    <location>
        <begin position="68"/>
        <end position="228"/>
    </location>
</feature>
<feature type="binding site" evidence="1">
    <location>
        <begin position="117"/>
        <end position="120"/>
    </location>
    <ligand>
        <name>GTP</name>
        <dbReference type="ChEBI" id="CHEBI:37565"/>
    </ligand>
</feature>
<feature type="binding site" evidence="1">
    <location>
        <begin position="170"/>
        <end position="178"/>
    </location>
    <ligand>
        <name>GTP</name>
        <dbReference type="ChEBI" id="CHEBI:37565"/>
    </ligand>
</feature>
<feature type="binding site" evidence="1">
    <location>
        <position position="250"/>
    </location>
    <ligand>
        <name>Zn(2+)</name>
        <dbReference type="ChEBI" id="CHEBI:29105"/>
    </ligand>
</feature>
<feature type="binding site" evidence="1">
    <location>
        <position position="255"/>
    </location>
    <ligand>
        <name>Zn(2+)</name>
        <dbReference type="ChEBI" id="CHEBI:29105"/>
    </ligand>
</feature>
<feature type="binding site" evidence="1">
    <location>
        <position position="257"/>
    </location>
    <ligand>
        <name>Zn(2+)</name>
        <dbReference type="ChEBI" id="CHEBI:29105"/>
    </ligand>
</feature>
<feature type="binding site" evidence="1">
    <location>
        <position position="263"/>
    </location>
    <ligand>
        <name>Zn(2+)</name>
        <dbReference type="ChEBI" id="CHEBI:29105"/>
    </ligand>
</feature>
<organism>
    <name type="scientific">Thermotoga petrophila (strain ATCC BAA-488 / DSM 13995 / JCM 10881 / RKU-1)</name>
    <dbReference type="NCBI Taxonomy" id="390874"/>
    <lineage>
        <taxon>Bacteria</taxon>
        <taxon>Thermotogati</taxon>
        <taxon>Thermotogota</taxon>
        <taxon>Thermotogae</taxon>
        <taxon>Thermotogales</taxon>
        <taxon>Thermotogaceae</taxon>
        <taxon>Thermotoga</taxon>
    </lineage>
</organism>
<keyword id="KW-0963">Cytoplasm</keyword>
<keyword id="KW-0342">GTP-binding</keyword>
<keyword id="KW-0378">Hydrolase</keyword>
<keyword id="KW-0479">Metal-binding</keyword>
<keyword id="KW-0547">Nucleotide-binding</keyword>
<keyword id="KW-0690">Ribosome biogenesis</keyword>
<keyword id="KW-0694">RNA-binding</keyword>
<keyword id="KW-0699">rRNA-binding</keyword>
<keyword id="KW-0862">Zinc</keyword>
<dbReference type="EC" id="3.6.1.-" evidence="1"/>
<dbReference type="EMBL" id="CP000702">
    <property type="protein sequence ID" value="ABQ47031.1"/>
    <property type="molecule type" value="Genomic_DNA"/>
</dbReference>
<dbReference type="RefSeq" id="WP_011943567.1">
    <property type="nucleotide sequence ID" value="NC_009486.1"/>
</dbReference>
<dbReference type="SMR" id="A5ILF8"/>
<dbReference type="STRING" id="390874.Tpet_1013"/>
<dbReference type="KEGG" id="tpt:Tpet_1013"/>
<dbReference type="eggNOG" id="COG1162">
    <property type="taxonomic scope" value="Bacteria"/>
</dbReference>
<dbReference type="HOGENOM" id="CLU_033617_2_1_0"/>
<dbReference type="Proteomes" id="UP000006558">
    <property type="component" value="Chromosome"/>
</dbReference>
<dbReference type="GO" id="GO:0005737">
    <property type="term" value="C:cytoplasm"/>
    <property type="evidence" value="ECO:0007669"/>
    <property type="project" value="UniProtKB-SubCell"/>
</dbReference>
<dbReference type="GO" id="GO:0005525">
    <property type="term" value="F:GTP binding"/>
    <property type="evidence" value="ECO:0007669"/>
    <property type="project" value="UniProtKB-UniRule"/>
</dbReference>
<dbReference type="GO" id="GO:0003924">
    <property type="term" value="F:GTPase activity"/>
    <property type="evidence" value="ECO:0007669"/>
    <property type="project" value="UniProtKB-UniRule"/>
</dbReference>
<dbReference type="GO" id="GO:0046872">
    <property type="term" value="F:metal ion binding"/>
    <property type="evidence" value="ECO:0007669"/>
    <property type="project" value="UniProtKB-KW"/>
</dbReference>
<dbReference type="GO" id="GO:0019843">
    <property type="term" value="F:rRNA binding"/>
    <property type="evidence" value="ECO:0007669"/>
    <property type="project" value="UniProtKB-KW"/>
</dbReference>
<dbReference type="GO" id="GO:0042274">
    <property type="term" value="P:ribosomal small subunit biogenesis"/>
    <property type="evidence" value="ECO:0007669"/>
    <property type="project" value="UniProtKB-UniRule"/>
</dbReference>
<dbReference type="CDD" id="cd04466">
    <property type="entry name" value="S1_YloQ_GTPase"/>
    <property type="match status" value="1"/>
</dbReference>
<dbReference type="CDD" id="cd01854">
    <property type="entry name" value="YjeQ_EngC"/>
    <property type="match status" value="1"/>
</dbReference>
<dbReference type="Gene3D" id="2.40.50.140">
    <property type="entry name" value="Nucleic acid-binding proteins"/>
    <property type="match status" value="1"/>
</dbReference>
<dbReference type="Gene3D" id="3.40.50.300">
    <property type="entry name" value="P-loop containing nucleotide triphosphate hydrolases"/>
    <property type="match status" value="1"/>
</dbReference>
<dbReference type="Gene3D" id="1.10.40.50">
    <property type="entry name" value="Probable gtpase engc, domain 3"/>
    <property type="match status" value="1"/>
</dbReference>
<dbReference type="HAMAP" id="MF_01820">
    <property type="entry name" value="GTPase_RsgA"/>
    <property type="match status" value="1"/>
</dbReference>
<dbReference type="InterPro" id="IPR030378">
    <property type="entry name" value="G_CP_dom"/>
</dbReference>
<dbReference type="InterPro" id="IPR012340">
    <property type="entry name" value="NA-bd_OB-fold"/>
</dbReference>
<dbReference type="InterPro" id="IPR027417">
    <property type="entry name" value="P-loop_NTPase"/>
</dbReference>
<dbReference type="InterPro" id="IPR004881">
    <property type="entry name" value="Ribosome_biogen_GTPase_RsgA"/>
</dbReference>
<dbReference type="InterPro" id="IPR010914">
    <property type="entry name" value="RsgA_GTPase_dom"/>
</dbReference>
<dbReference type="InterPro" id="IPR031944">
    <property type="entry name" value="RsgA_N"/>
</dbReference>
<dbReference type="NCBIfam" id="TIGR00157">
    <property type="entry name" value="ribosome small subunit-dependent GTPase A"/>
    <property type="match status" value="1"/>
</dbReference>
<dbReference type="PANTHER" id="PTHR32120">
    <property type="entry name" value="SMALL RIBOSOMAL SUBUNIT BIOGENESIS GTPASE RSGA"/>
    <property type="match status" value="1"/>
</dbReference>
<dbReference type="PANTHER" id="PTHR32120:SF11">
    <property type="entry name" value="SMALL RIBOSOMAL SUBUNIT BIOGENESIS GTPASE RSGA 1, MITOCHONDRIAL-RELATED"/>
    <property type="match status" value="1"/>
</dbReference>
<dbReference type="Pfam" id="PF03193">
    <property type="entry name" value="RsgA_GTPase"/>
    <property type="match status" value="1"/>
</dbReference>
<dbReference type="Pfam" id="PF16745">
    <property type="entry name" value="RsgA_N"/>
    <property type="match status" value="1"/>
</dbReference>
<dbReference type="SUPFAM" id="SSF50249">
    <property type="entry name" value="Nucleic acid-binding proteins"/>
    <property type="match status" value="1"/>
</dbReference>
<dbReference type="SUPFAM" id="SSF52540">
    <property type="entry name" value="P-loop containing nucleoside triphosphate hydrolases"/>
    <property type="match status" value="1"/>
</dbReference>
<dbReference type="PROSITE" id="PS50936">
    <property type="entry name" value="ENGC_GTPASE"/>
    <property type="match status" value="1"/>
</dbReference>
<dbReference type="PROSITE" id="PS51721">
    <property type="entry name" value="G_CP"/>
    <property type="match status" value="1"/>
</dbReference>
<name>RSGA_THEP1</name>
<reference key="1">
    <citation type="submission" date="2007-05" db="EMBL/GenBank/DDBJ databases">
        <title>Complete sequence of Thermotoga petrophila RKU-1.</title>
        <authorList>
            <consortium name="US DOE Joint Genome Institute"/>
            <person name="Copeland A."/>
            <person name="Lucas S."/>
            <person name="Lapidus A."/>
            <person name="Barry K."/>
            <person name="Glavina del Rio T."/>
            <person name="Dalin E."/>
            <person name="Tice H."/>
            <person name="Pitluck S."/>
            <person name="Sims D."/>
            <person name="Brettin T."/>
            <person name="Bruce D."/>
            <person name="Detter J.C."/>
            <person name="Han C."/>
            <person name="Tapia R."/>
            <person name="Schmutz J."/>
            <person name="Larimer F."/>
            <person name="Land M."/>
            <person name="Hauser L."/>
            <person name="Kyrpides N."/>
            <person name="Mikhailova N."/>
            <person name="Nelson K."/>
            <person name="Gogarten J.P."/>
            <person name="Noll K."/>
            <person name="Richardson P."/>
        </authorList>
    </citation>
    <scope>NUCLEOTIDE SEQUENCE [LARGE SCALE GENOMIC DNA]</scope>
    <source>
        <strain>ATCC BAA-488 / DSM 13995 / JCM 10881 / RKU-1</strain>
    </source>
</reference>
<evidence type="ECO:0000255" key="1">
    <source>
        <dbReference type="HAMAP-Rule" id="MF_01820"/>
    </source>
</evidence>
<evidence type="ECO:0000255" key="2">
    <source>
        <dbReference type="PROSITE-ProRule" id="PRU01058"/>
    </source>
</evidence>
<proteinExistence type="inferred from homology"/>